<dbReference type="EC" id="2.3.1.225" evidence="2"/>
<dbReference type="EMBL" id="AB024495">
    <property type="protein sequence ID" value="BAC22090.1"/>
    <property type="molecule type" value="mRNA"/>
</dbReference>
<dbReference type="EMBL" id="AB097014">
    <property type="protein sequence ID" value="BAC77367.1"/>
    <property type="molecule type" value="mRNA"/>
</dbReference>
<dbReference type="EMBL" id="AB097027">
    <property type="protein sequence ID" value="BAC77380.1"/>
    <property type="molecule type" value="mRNA"/>
</dbReference>
<dbReference type="EMBL" id="AK001714">
    <property type="protein sequence ID" value="BAA91856.1"/>
    <property type="status" value="ALT_SEQ"/>
    <property type="molecule type" value="mRNA"/>
</dbReference>
<dbReference type="EMBL" id="AK001831">
    <property type="protein sequence ID" value="BAA91930.1"/>
    <property type="molecule type" value="mRNA"/>
</dbReference>
<dbReference type="EMBL" id="AC009652">
    <property type="status" value="NOT_ANNOTATED_CDS"/>
    <property type="molecule type" value="Genomic_DNA"/>
</dbReference>
<dbReference type="EMBL" id="BC050690">
    <property type="protein sequence ID" value="AAH50690.2"/>
    <property type="molecule type" value="mRNA"/>
</dbReference>
<dbReference type="EMBL" id="BC036020">
    <property type="protein sequence ID" value="AAH36020.1"/>
    <property type="molecule type" value="mRNA"/>
</dbReference>
<dbReference type="EMBL" id="BC056152">
    <property type="protein sequence ID" value="AAH56152.1"/>
    <property type="molecule type" value="mRNA"/>
</dbReference>
<dbReference type="CCDS" id="CCDS44550.1">
    <molecule id="Q8IUH4-1"/>
</dbReference>
<dbReference type="CCDS" id="CCDS44551.1">
    <molecule id="Q8IUH4-3"/>
</dbReference>
<dbReference type="RefSeq" id="NP_001001483.1">
    <molecule id="Q8IUH4-3"/>
    <property type="nucleotide sequence ID" value="NM_001001483.3"/>
</dbReference>
<dbReference type="RefSeq" id="NP_061901.2">
    <molecule id="Q8IUH4-1"/>
    <property type="nucleotide sequence ID" value="NM_019028.2"/>
</dbReference>
<dbReference type="RefSeq" id="XP_005253053.1">
    <molecule id="Q8IUH4-3"/>
    <property type="nucleotide sequence ID" value="XM_005252996.3"/>
</dbReference>
<dbReference type="RefSeq" id="XP_011518497.1">
    <molecule id="Q8IUH4-3"/>
    <property type="nucleotide sequence ID" value="XM_011520195.2"/>
</dbReference>
<dbReference type="RefSeq" id="XP_054225138.1">
    <molecule id="Q8IUH4-3"/>
    <property type="nucleotide sequence ID" value="XM_054369163.1"/>
</dbReference>
<dbReference type="RefSeq" id="XP_054225139.1">
    <molecule id="Q8IUH4-3"/>
    <property type="nucleotide sequence ID" value="XM_054369164.1"/>
</dbReference>
<dbReference type="SMR" id="Q8IUH4"/>
<dbReference type="BioGRID" id="119999">
    <property type="interactions" value="76"/>
</dbReference>
<dbReference type="FunCoup" id="Q8IUH4">
    <property type="interactions" value="1608"/>
</dbReference>
<dbReference type="IntAct" id="Q8IUH4">
    <property type="interactions" value="44"/>
</dbReference>
<dbReference type="MINT" id="Q8IUH4"/>
<dbReference type="STRING" id="9606.ENSP00000400113"/>
<dbReference type="TCDB" id="8.A.114.1.7">
    <property type="family name" value="the huntington-interacting protein 14 (hip14) family"/>
</dbReference>
<dbReference type="GlyGen" id="Q8IUH4">
    <property type="glycosylation" value="3 sites, 2 N-linked glycans (2 sites), 1 O-linked glycan (1 site)"/>
</dbReference>
<dbReference type="iPTMnet" id="Q8IUH4"/>
<dbReference type="PhosphoSitePlus" id="Q8IUH4"/>
<dbReference type="SwissPalm" id="Q8IUH4"/>
<dbReference type="BioMuta" id="ZDHHC13"/>
<dbReference type="DMDM" id="269849714"/>
<dbReference type="jPOST" id="Q8IUH4"/>
<dbReference type="MassIVE" id="Q8IUH4"/>
<dbReference type="PaxDb" id="9606-ENSP00000400113"/>
<dbReference type="PeptideAtlas" id="Q8IUH4"/>
<dbReference type="ProteomicsDB" id="70569">
    <molecule id="Q8IUH4-1"/>
</dbReference>
<dbReference type="ProteomicsDB" id="70570">
    <molecule id="Q8IUH4-2"/>
</dbReference>
<dbReference type="ProteomicsDB" id="70571">
    <molecule id="Q8IUH4-3"/>
</dbReference>
<dbReference type="Pumba" id="Q8IUH4"/>
<dbReference type="Antibodypedia" id="6224">
    <property type="antibodies" value="164 antibodies from 34 providers"/>
</dbReference>
<dbReference type="DNASU" id="54503"/>
<dbReference type="Ensembl" id="ENST00000399351.7">
    <molecule id="Q8IUH4-3"/>
    <property type="protein sequence ID" value="ENSP00000382288.3"/>
    <property type="gene ID" value="ENSG00000177054.14"/>
</dbReference>
<dbReference type="Ensembl" id="ENST00000446113.7">
    <molecule id="Q8IUH4-1"/>
    <property type="protein sequence ID" value="ENSP00000400113.2"/>
    <property type="gene ID" value="ENSG00000177054.14"/>
</dbReference>
<dbReference type="GeneID" id="54503"/>
<dbReference type="KEGG" id="hsa:54503"/>
<dbReference type="MANE-Select" id="ENST00000446113.7">
    <property type="protein sequence ID" value="ENSP00000400113.2"/>
    <property type="RefSeq nucleotide sequence ID" value="NM_019028.3"/>
    <property type="RefSeq protein sequence ID" value="NP_061901.2"/>
</dbReference>
<dbReference type="UCSC" id="uc001mpi.4">
    <molecule id="Q8IUH4-1"/>
    <property type="organism name" value="human"/>
</dbReference>
<dbReference type="AGR" id="HGNC:18413"/>
<dbReference type="CTD" id="54503"/>
<dbReference type="DisGeNET" id="54503"/>
<dbReference type="GeneCards" id="ZDHHC13"/>
<dbReference type="HGNC" id="HGNC:18413">
    <property type="gene designation" value="ZDHHC13"/>
</dbReference>
<dbReference type="HPA" id="ENSG00000177054">
    <property type="expression patterns" value="Low tissue specificity"/>
</dbReference>
<dbReference type="MIM" id="612815">
    <property type="type" value="gene"/>
</dbReference>
<dbReference type="neXtProt" id="NX_Q8IUH4"/>
<dbReference type="OpenTargets" id="ENSG00000177054"/>
<dbReference type="PharmGKB" id="PA134955878"/>
<dbReference type="VEuPathDB" id="HostDB:ENSG00000177054"/>
<dbReference type="eggNOG" id="KOG0509">
    <property type="taxonomic scope" value="Eukaryota"/>
</dbReference>
<dbReference type="GeneTree" id="ENSGT00530000063074"/>
<dbReference type="HOGENOM" id="CLU_012510_3_1_1"/>
<dbReference type="InParanoid" id="Q8IUH4"/>
<dbReference type="OMA" id="RECQSHS"/>
<dbReference type="OrthoDB" id="6781668at2759"/>
<dbReference type="PAN-GO" id="Q8IUH4">
    <property type="GO annotations" value="3 GO annotations based on evolutionary models"/>
</dbReference>
<dbReference type="PhylomeDB" id="Q8IUH4"/>
<dbReference type="TreeFam" id="TF317342"/>
<dbReference type="PathwayCommons" id="Q8IUH4"/>
<dbReference type="SignaLink" id="Q8IUH4"/>
<dbReference type="SIGNOR" id="Q8IUH4"/>
<dbReference type="BioGRID-ORCS" id="54503">
    <property type="hits" value="17 hits in 1166 CRISPR screens"/>
</dbReference>
<dbReference type="ChiTaRS" id="ZDHHC13">
    <property type="organism name" value="human"/>
</dbReference>
<dbReference type="GenomeRNAi" id="54503"/>
<dbReference type="Pharos" id="Q8IUH4">
    <property type="development level" value="Tbio"/>
</dbReference>
<dbReference type="PRO" id="PR:Q8IUH4"/>
<dbReference type="Proteomes" id="UP000005640">
    <property type="component" value="Chromosome 11"/>
</dbReference>
<dbReference type="RNAct" id="Q8IUH4">
    <property type="molecule type" value="protein"/>
</dbReference>
<dbReference type="Bgee" id="ENSG00000177054">
    <property type="expression patterns" value="Expressed in buccal mucosa cell and 175 other cell types or tissues"/>
</dbReference>
<dbReference type="GO" id="GO:0005783">
    <property type="term" value="C:endoplasmic reticulum"/>
    <property type="evidence" value="ECO:0000314"/>
    <property type="project" value="UniProtKB"/>
</dbReference>
<dbReference type="GO" id="GO:0000139">
    <property type="term" value="C:Golgi membrane"/>
    <property type="evidence" value="ECO:0000250"/>
    <property type="project" value="UniProtKB"/>
</dbReference>
<dbReference type="GO" id="GO:0030660">
    <property type="term" value="C:Golgi-associated vesicle membrane"/>
    <property type="evidence" value="ECO:0000250"/>
    <property type="project" value="UniProtKB"/>
</dbReference>
<dbReference type="GO" id="GO:0016020">
    <property type="term" value="C:membrane"/>
    <property type="evidence" value="ECO:0007005"/>
    <property type="project" value="UniProtKB"/>
</dbReference>
<dbReference type="GO" id="GO:0015095">
    <property type="term" value="F:magnesium ion transmembrane transporter activity"/>
    <property type="evidence" value="ECO:0000250"/>
    <property type="project" value="UniProtKB"/>
</dbReference>
<dbReference type="GO" id="GO:0016409">
    <property type="term" value="F:palmitoyltransferase activity"/>
    <property type="evidence" value="ECO:0000250"/>
    <property type="project" value="UniProtKB"/>
</dbReference>
<dbReference type="GO" id="GO:0019706">
    <property type="term" value="F:protein-cysteine S-palmitoyltransferase activity"/>
    <property type="evidence" value="ECO:0007669"/>
    <property type="project" value="UniProtKB-EC"/>
</dbReference>
<dbReference type="GO" id="GO:0043123">
    <property type="term" value="P:positive regulation of canonical NF-kappaB signal transduction"/>
    <property type="evidence" value="ECO:0007001"/>
    <property type="project" value="UniProtKB"/>
</dbReference>
<dbReference type="FunFam" id="1.25.40.20:FF:000035">
    <property type="entry name" value="Palmitoyltransferase"/>
    <property type="match status" value="1"/>
</dbReference>
<dbReference type="Gene3D" id="1.25.40.20">
    <property type="entry name" value="Ankyrin repeat-containing domain"/>
    <property type="match status" value="1"/>
</dbReference>
<dbReference type="InterPro" id="IPR002110">
    <property type="entry name" value="Ankyrin_rpt"/>
</dbReference>
<dbReference type="InterPro" id="IPR036770">
    <property type="entry name" value="Ankyrin_rpt-contain_sf"/>
</dbReference>
<dbReference type="InterPro" id="IPR001594">
    <property type="entry name" value="Palmitoyltrfase_DHHC"/>
</dbReference>
<dbReference type="PANTHER" id="PTHR24161">
    <property type="entry name" value="ANK_REP_REGION DOMAIN-CONTAINING PROTEIN-RELATED"/>
    <property type="match status" value="1"/>
</dbReference>
<dbReference type="PANTHER" id="PTHR24161:SF16">
    <property type="entry name" value="PALMITOYLTRANSFERASE ZDHHC13"/>
    <property type="match status" value="1"/>
</dbReference>
<dbReference type="Pfam" id="PF12796">
    <property type="entry name" value="Ank_2"/>
    <property type="match status" value="2"/>
</dbReference>
<dbReference type="Pfam" id="PF01529">
    <property type="entry name" value="DHHC"/>
    <property type="match status" value="1"/>
</dbReference>
<dbReference type="SMART" id="SM00248">
    <property type="entry name" value="ANK"/>
    <property type="match status" value="6"/>
</dbReference>
<dbReference type="SUPFAM" id="SSF48403">
    <property type="entry name" value="Ankyrin repeat"/>
    <property type="match status" value="1"/>
</dbReference>
<dbReference type="PROSITE" id="PS50297">
    <property type="entry name" value="ANK_REP_REGION"/>
    <property type="match status" value="1"/>
</dbReference>
<dbReference type="PROSITE" id="PS50088">
    <property type="entry name" value="ANK_REPEAT"/>
    <property type="match status" value="4"/>
</dbReference>
<dbReference type="PROSITE" id="PS50216">
    <property type="entry name" value="DHHC"/>
    <property type="match status" value="1"/>
</dbReference>
<gene>
    <name evidence="16" type="primary">ZDHHC13</name>
    <name evidence="9" type="synonym">HIP14L</name>
    <name evidence="13" type="synonym">HIP3RP</name>
</gene>
<feature type="chain" id="PRO_0000212887" description="Palmitoyltransferase ZDHHC13">
    <location>
        <begin position="1"/>
        <end position="622"/>
    </location>
</feature>
<feature type="topological domain" description="Cytoplasmic" evidence="12">
    <location>
        <begin position="1"/>
        <end position="291"/>
    </location>
</feature>
<feature type="transmembrane region" description="Helical" evidence="3">
    <location>
        <begin position="292"/>
        <end position="312"/>
    </location>
</feature>
<feature type="topological domain" description="Lumenal" evidence="12">
    <location>
        <begin position="313"/>
        <end position="320"/>
    </location>
</feature>
<feature type="transmembrane region" description="Helical" evidence="3">
    <location>
        <begin position="321"/>
        <end position="341"/>
    </location>
</feature>
<feature type="topological domain" description="Cytoplasmic" evidence="12">
    <location>
        <begin position="342"/>
        <end position="347"/>
    </location>
</feature>
<feature type="transmembrane region" description="Helical" evidence="3">
    <location>
        <begin position="348"/>
        <end position="368"/>
    </location>
</feature>
<feature type="topological domain" description="Lumenal" evidence="12">
    <location>
        <begin position="369"/>
        <end position="370"/>
    </location>
</feature>
<feature type="transmembrane region" description="Helical" evidence="3">
    <location>
        <begin position="371"/>
        <end position="391"/>
    </location>
</feature>
<feature type="topological domain" description="Cytoplasmic" evidence="12">
    <location>
        <begin position="392"/>
        <end position="470"/>
    </location>
</feature>
<feature type="transmembrane region" description="Helical" evidence="3">
    <location>
        <begin position="471"/>
        <end position="491"/>
    </location>
</feature>
<feature type="topological domain" description="Lumenal" evidence="12">
    <location>
        <begin position="492"/>
        <end position="518"/>
    </location>
</feature>
<feature type="transmembrane region" description="Helical" evidence="3">
    <location>
        <begin position="519"/>
        <end position="539"/>
    </location>
</feature>
<feature type="topological domain" description="Cytoplasmic" evidence="12">
    <location>
        <begin position="540"/>
        <end position="622"/>
    </location>
</feature>
<feature type="repeat" description="ANK 1" evidence="1">
    <location>
        <begin position="43"/>
        <end position="78"/>
    </location>
</feature>
<feature type="repeat" description="ANK 2" evidence="3">
    <location>
        <begin position="81"/>
        <end position="110"/>
    </location>
</feature>
<feature type="repeat" description="ANK 3" evidence="3">
    <location>
        <begin position="115"/>
        <end position="144"/>
    </location>
</feature>
<feature type="repeat" description="ANK 4" evidence="3">
    <location>
        <begin position="148"/>
        <end position="177"/>
    </location>
</feature>
<feature type="repeat" description="ANK 5" evidence="3">
    <location>
        <begin position="181"/>
        <end position="211"/>
    </location>
</feature>
<feature type="repeat" description="ANK 6" evidence="3">
    <location>
        <begin position="216"/>
        <end position="245"/>
    </location>
</feature>
<feature type="repeat" description="ANK 7" evidence="3">
    <location>
        <begin position="249"/>
        <end position="277"/>
    </location>
</feature>
<feature type="domain" description="DHHC" evidence="4">
    <location>
        <begin position="426"/>
        <end position="476"/>
    </location>
</feature>
<feature type="active site" description="S-palmitoyl cysteine intermediate" evidence="4">
    <location>
        <position position="456"/>
    </location>
</feature>
<feature type="modified residue" description="N-acetylmethionine" evidence="17">
    <location>
        <position position="1"/>
    </location>
</feature>
<feature type="splice variant" id="VSP_010029" description="In isoform 2." evidence="10">
    <location>
        <begin position="1"/>
        <end position="176"/>
    </location>
</feature>
<feature type="splice variant" id="VSP_010028" description="In isoform 3." evidence="11">
    <location>
        <begin position="1"/>
        <end position="130"/>
    </location>
</feature>
<feature type="sequence variant" id="VAR_023835" description="In dbSNP:rs2271001." evidence="5 6 7">
    <original>K</original>
    <variation>R</variation>
    <location>
        <position position="99"/>
    </location>
</feature>
<feature type="sequence variant" id="VAR_057490" description="In dbSNP:rs12798330.">
    <original>Y</original>
    <variation>C</variation>
    <location>
        <position position="392"/>
    </location>
</feature>
<feature type="sequence conflict" description="In Ref. 1; BAC22090." evidence="12" ref="1">
    <original>N</original>
    <variation>T</variation>
    <location>
        <position position="467"/>
    </location>
</feature>
<feature type="sequence conflict" description="In Ref. 3; BAA91856." evidence="12" ref="3">
    <original>N</original>
    <variation>D</variation>
    <location>
        <position position="583"/>
    </location>
</feature>
<accession>Q8IUH4</accession>
<accession>Q7Z2D3</accession>
<accession>Q86VK2</accession>
<accession>Q9NV30</accession>
<accession>Q9NV99</accession>
<organism>
    <name type="scientific">Homo sapiens</name>
    <name type="common">Human</name>
    <dbReference type="NCBI Taxonomy" id="9606"/>
    <lineage>
        <taxon>Eukaryota</taxon>
        <taxon>Metazoa</taxon>
        <taxon>Chordata</taxon>
        <taxon>Craniata</taxon>
        <taxon>Vertebrata</taxon>
        <taxon>Euteleostomi</taxon>
        <taxon>Mammalia</taxon>
        <taxon>Eutheria</taxon>
        <taxon>Euarchontoglires</taxon>
        <taxon>Primates</taxon>
        <taxon>Haplorrhini</taxon>
        <taxon>Catarrhini</taxon>
        <taxon>Hominidae</taxon>
        <taxon>Homo</taxon>
    </lineage>
</organism>
<evidence type="ECO:0000250" key="1">
    <source>
        <dbReference type="UniProtKB" id="Q8IUH5"/>
    </source>
</evidence>
<evidence type="ECO:0000250" key="2">
    <source>
        <dbReference type="UniProtKB" id="Q9CWU2"/>
    </source>
</evidence>
<evidence type="ECO:0000255" key="3"/>
<evidence type="ECO:0000255" key="4">
    <source>
        <dbReference type="PROSITE-ProRule" id="PRU00067"/>
    </source>
</evidence>
<evidence type="ECO:0000269" key="5">
    <source>
    </source>
</evidence>
<evidence type="ECO:0000269" key="6">
    <source>
    </source>
</evidence>
<evidence type="ECO:0000269" key="7">
    <source>
    </source>
</evidence>
<evidence type="ECO:0000269" key="8">
    <source>
    </source>
</evidence>
<evidence type="ECO:0000303" key="9">
    <source>
    </source>
</evidence>
<evidence type="ECO:0000303" key="10">
    <source>
    </source>
</evidence>
<evidence type="ECO:0000303" key="11">
    <source>
    </source>
</evidence>
<evidence type="ECO:0000305" key="12"/>
<evidence type="ECO:0000312" key="13">
    <source>
        <dbReference type="EMBL" id="BAC22090.1"/>
    </source>
</evidence>
<evidence type="ECO:0000312" key="14">
    <source>
        <dbReference type="EMBL" id="BAC77367.1"/>
    </source>
</evidence>
<evidence type="ECO:0000312" key="15">
    <source>
        <dbReference type="EMBL" id="BAC77380.1"/>
    </source>
</evidence>
<evidence type="ECO:0000312" key="16">
    <source>
        <dbReference type="HGNC" id="HGNC:18413"/>
    </source>
</evidence>
<evidence type="ECO:0007744" key="17">
    <source>
    </source>
</evidence>
<keyword id="KW-0007">Acetylation</keyword>
<keyword id="KW-0012">Acyltransferase</keyword>
<keyword id="KW-0025">Alternative splicing</keyword>
<keyword id="KW-0040">ANK repeat</keyword>
<keyword id="KW-0968">Cytoplasmic vesicle</keyword>
<keyword id="KW-0333">Golgi apparatus</keyword>
<keyword id="KW-0449">Lipoprotein</keyword>
<keyword id="KW-0472">Membrane</keyword>
<keyword id="KW-0564">Palmitate</keyword>
<keyword id="KW-1267">Proteomics identification</keyword>
<keyword id="KW-1185">Reference proteome</keyword>
<keyword id="KW-0677">Repeat</keyword>
<keyword id="KW-0808">Transferase</keyword>
<keyword id="KW-0812">Transmembrane</keyword>
<keyword id="KW-1133">Transmembrane helix</keyword>
<sequence>MEGPGLGSQCRNHSHGPHPPGFGRYGICAHENKELANAREALPLIEDSSNCDIVKATQYGIFERCKELVEAGYDVRQPDKENVSLLHWAAINNRLDLVKFYISKGAVVDQLGGDLNSTPLHWAIRQGHLPMVILLLQHGADPTLIDGEGFSSIHLAVLFQHMPIIAYLISKGQSVNMTDVNGQTPLMLSAHKVIGPEPTGFLLKFNPSLNVVDKIHQNTPLHWAVAAGNVNAVDKLLEAGSSLDIQNVKGETPLDMALQNKNQLIIHMLKTEAKMRANQKFRLWRWLQKCELFLLLMLSVITMWAIGYILDFNSDSWLLKGCLLVTLFFLTSLFPRFLVGYKNLVYLPTAFLLSSVFWIFMTWFILFFPDLAGAPFYFSFIFSIVAFLYFFYKTWATDPGFTKASEEEKKVNIITLAETGSLDFRTFCTSCLIRKPLRSLHCHVCNCCVARYDQHCLWTGRCIGFGNHHYYIFFLFFLSMVCGWIIYGSFIYLSSHCATTFKEDGLWTYLNQIVACSPWVLYILMLATFHFSWSTFLLLNQLFQIAFLGLTSHERISLQKQSKHMKQTLSLRKTPYNLGFMQNLADFFQCGCFGLVKPCVVDWTSQYTMVFHPAREKVLRSV</sequence>
<protein>
    <recommendedName>
        <fullName evidence="12">Palmitoyltransferase ZDHHC13</fullName>
        <ecNumber evidence="2">2.3.1.225</ecNumber>
    </recommendedName>
    <alternativeName>
        <fullName evidence="9">Huntingtin-interacting protein 14-related protein</fullName>
        <shortName evidence="9">HIP14-related protein</shortName>
    </alternativeName>
    <alternativeName>
        <fullName evidence="13">Huntingtin-interacting protein HIP3RP</fullName>
    </alternativeName>
    <alternativeName>
        <fullName evidence="15">Putative MAPK-activating protein PM03</fullName>
    </alternativeName>
    <alternativeName>
        <fullName evidence="14">Putative NF-kappa-B-activating protein 209</fullName>
    </alternativeName>
    <alternativeName>
        <fullName evidence="16">Zinc finger DHHC domain-containing protein 13</fullName>
        <shortName evidence="2">DHHC-13</shortName>
    </alternativeName>
</protein>
<reference key="1">
    <citation type="journal article" date="2002" name="Hum. Mol. Genet.">
        <title>HIP14, a novel ankyrin domain-containing protein, links huntingtin to intracellular trafficking and endocytosis.</title>
        <authorList>
            <person name="Singaraja R.R."/>
            <person name="Hadano S."/>
            <person name="Metzler M."/>
            <person name="Givan S."/>
            <person name="Wellington C.L."/>
            <person name="Warby S."/>
            <person name="Yanai A."/>
            <person name="Gutekunst C.-A."/>
            <person name="Leavitt B.R."/>
            <person name="Yi H."/>
            <person name="Fichter K."/>
            <person name="Gan L."/>
            <person name="McGutcheon K."/>
            <person name="Chopra V."/>
            <person name="Michel J."/>
            <person name="Hersch S.M."/>
            <person name="Ikeda J.E."/>
            <person name="Hayden M.R."/>
        </authorList>
    </citation>
    <scope>NUCLEOTIDE SEQUENCE [MRNA] (ISOFORM 1)</scope>
    <scope>VARIANT ARG-99</scope>
</reference>
<reference key="2">
    <citation type="journal article" date="2003" name="Oncogene">
        <title>Large-scale identification and characterization of human genes that activate NF-kappaB and MAPK signaling pathways.</title>
        <authorList>
            <person name="Matsuda A."/>
            <person name="Suzuki Y."/>
            <person name="Honda G."/>
            <person name="Muramatsu S."/>
            <person name="Matsuzaki O."/>
            <person name="Nagano Y."/>
            <person name="Doi T."/>
            <person name="Shimotohno K."/>
            <person name="Harada T."/>
            <person name="Nishida E."/>
            <person name="Hayashi H."/>
            <person name="Sugano S."/>
        </authorList>
    </citation>
    <scope>NUCLEOTIDE SEQUENCE [LARGE SCALE MRNA] (ISOFORM 1)</scope>
    <source>
        <tissue>Lung fibroblast</tissue>
    </source>
</reference>
<reference key="3">
    <citation type="journal article" date="2004" name="Nat. Genet.">
        <title>Complete sequencing and characterization of 21,243 full-length human cDNAs.</title>
        <authorList>
            <person name="Ota T."/>
            <person name="Suzuki Y."/>
            <person name="Nishikawa T."/>
            <person name="Otsuki T."/>
            <person name="Sugiyama T."/>
            <person name="Irie R."/>
            <person name="Wakamatsu A."/>
            <person name="Hayashi K."/>
            <person name="Sato H."/>
            <person name="Nagai K."/>
            <person name="Kimura K."/>
            <person name="Makita H."/>
            <person name="Sekine M."/>
            <person name="Obayashi M."/>
            <person name="Nishi T."/>
            <person name="Shibahara T."/>
            <person name="Tanaka T."/>
            <person name="Ishii S."/>
            <person name="Yamamoto J."/>
            <person name="Saito K."/>
            <person name="Kawai Y."/>
            <person name="Isono Y."/>
            <person name="Nakamura Y."/>
            <person name="Nagahari K."/>
            <person name="Murakami K."/>
            <person name="Yasuda T."/>
            <person name="Iwayanagi T."/>
            <person name="Wagatsuma M."/>
            <person name="Shiratori A."/>
            <person name="Sudo H."/>
            <person name="Hosoiri T."/>
            <person name="Kaku Y."/>
            <person name="Kodaira H."/>
            <person name="Kondo H."/>
            <person name="Sugawara M."/>
            <person name="Takahashi M."/>
            <person name="Kanda K."/>
            <person name="Yokoi T."/>
            <person name="Furuya T."/>
            <person name="Kikkawa E."/>
            <person name="Omura Y."/>
            <person name="Abe K."/>
            <person name="Kamihara K."/>
            <person name="Katsuta N."/>
            <person name="Sato K."/>
            <person name="Tanikawa M."/>
            <person name="Yamazaki M."/>
            <person name="Ninomiya K."/>
            <person name="Ishibashi T."/>
            <person name="Yamashita H."/>
            <person name="Murakawa K."/>
            <person name="Fujimori K."/>
            <person name="Tanai H."/>
            <person name="Kimata M."/>
            <person name="Watanabe M."/>
            <person name="Hiraoka S."/>
            <person name="Chiba Y."/>
            <person name="Ishida S."/>
            <person name="Ono Y."/>
            <person name="Takiguchi S."/>
            <person name="Watanabe S."/>
            <person name="Yosida M."/>
            <person name="Hotuta T."/>
            <person name="Kusano J."/>
            <person name="Kanehori K."/>
            <person name="Takahashi-Fujii A."/>
            <person name="Hara H."/>
            <person name="Tanase T.-O."/>
            <person name="Nomura Y."/>
            <person name="Togiya S."/>
            <person name="Komai F."/>
            <person name="Hara R."/>
            <person name="Takeuchi K."/>
            <person name="Arita M."/>
            <person name="Imose N."/>
            <person name="Musashino K."/>
            <person name="Yuuki H."/>
            <person name="Oshima A."/>
            <person name="Sasaki N."/>
            <person name="Aotsuka S."/>
            <person name="Yoshikawa Y."/>
            <person name="Matsunawa H."/>
            <person name="Ichihara T."/>
            <person name="Shiohata N."/>
            <person name="Sano S."/>
            <person name="Moriya S."/>
            <person name="Momiyama H."/>
            <person name="Satoh N."/>
            <person name="Takami S."/>
            <person name="Terashima Y."/>
            <person name="Suzuki O."/>
            <person name="Nakagawa S."/>
            <person name="Senoh A."/>
            <person name="Mizoguchi H."/>
            <person name="Goto Y."/>
            <person name="Shimizu F."/>
            <person name="Wakebe H."/>
            <person name="Hishigaki H."/>
            <person name="Watanabe T."/>
            <person name="Sugiyama A."/>
            <person name="Takemoto M."/>
            <person name="Kawakami B."/>
            <person name="Yamazaki M."/>
            <person name="Watanabe K."/>
            <person name="Kumagai A."/>
            <person name="Itakura S."/>
            <person name="Fukuzumi Y."/>
            <person name="Fujimori Y."/>
            <person name="Komiyama M."/>
            <person name="Tashiro H."/>
            <person name="Tanigami A."/>
            <person name="Fujiwara T."/>
            <person name="Ono T."/>
            <person name="Yamada K."/>
            <person name="Fujii Y."/>
            <person name="Ozaki K."/>
            <person name="Hirao M."/>
            <person name="Ohmori Y."/>
            <person name="Kawabata A."/>
            <person name="Hikiji T."/>
            <person name="Kobatake N."/>
            <person name="Inagaki H."/>
            <person name="Ikema Y."/>
            <person name="Okamoto S."/>
            <person name="Okitani R."/>
            <person name="Kawakami T."/>
            <person name="Noguchi S."/>
            <person name="Itoh T."/>
            <person name="Shigeta K."/>
            <person name="Senba T."/>
            <person name="Matsumura K."/>
            <person name="Nakajima Y."/>
            <person name="Mizuno T."/>
            <person name="Morinaga M."/>
            <person name="Sasaki M."/>
            <person name="Togashi T."/>
            <person name="Oyama M."/>
            <person name="Hata H."/>
            <person name="Watanabe M."/>
            <person name="Komatsu T."/>
            <person name="Mizushima-Sugano J."/>
            <person name="Satoh T."/>
            <person name="Shirai Y."/>
            <person name="Takahashi Y."/>
            <person name="Nakagawa K."/>
            <person name="Okumura K."/>
            <person name="Nagase T."/>
            <person name="Nomura N."/>
            <person name="Kikuchi H."/>
            <person name="Masuho Y."/>
            <person name="Yamashita R."/>
            <person name="Nakai K."/>
            <person name="Yada T."/>
            <person name="Nakamura Y."/>
            <person name="Ohara O."/>
            <person name="Isogai T."/>
            <person name="Sugano S."/>
        </authorList>
    </citation>
    <scope>NUCLEOTIDE SEQUENCE [LARGE SCALE MRNA] (ISOFORMS 1 AND 2)</scope>
    <scope>VARIANT ARG-99</scope>
    <source>
        <tissue>Placenta</tissue>
        <tissue>Teratocarcinoma</tissue>
    </source>
</reference>
<reference key="4">
    <citation type="journal article" date="2006" name="Nature">
        <title>Human chromosome 11 DNA sequence and analysis including novel gene identification.</title>
        <authorList>
            <person name="Taylor T.D."/>
            <person name="Noguchi H."/>
            <person name="Totoki Y."/>
            <person name="Toyoda A."/>
            <person name="Kuroki Y."/>
            <person name="Dewar K."/>
            <person name="Lloyd C."/>
            <person name="Itoh T."/>
            <person name="Takeda T."/>
            <person name="Kim D.-W."/>
            <person name="She X."/>
            <person name="Barlow K.F."/>
            <person name="Bloom T."/>
            <person name="Bruford E."/>
            <person name="Chang J.L."/>
            <person name="Cuomo C.A."/>
            <person name="Eichler E."/>
            <person name="FitzGerald M.G."/>
            <person name="Jaffe D.B."/>
            <person name="LaButti K."/>
            <person name="Nicol R."/>
            <person name="Park H.-S."/>
            <person name="Seaman C."/>
            <person name="Sougnez C."/>
            <person name="Yang X."/>
            <person name="Zimmer A.R."/>
            <person name="Zody M.C."/>
            <person name="Birren B.W."/>
            <person name="Nusbaum C."/>
            <person name="Fujiyama A."/>
            <person name="Hattori M."/>
            <person name="Rogers J."/>
            <person name="Lander E.S."/>
            <person name="Sakaki Y."/>
        </authorList>
    </citation>
    <scope>NUCLEOTIDE SEQUENCE [LARGE SCALE GENOMIC DNA]</scope>
</reference>
<reference key="5">
    <citation type="journal article" date="2004" name="Genome Res.">
        <title>The status, quality, and expansion of the NIH full-length cDNA project: the Mammalian Gene Collection (MGC).</title>
        <authorList>
            <consortium name="The MGC Project Team"/>
        </authorList>
    </citation>
    <scope>NUCLEOTIDE SEQUENCE [LARGE SCALE MRNA] (ISOFORMS 1 AND 3)</scope>
    <scope>VARIANT ARG-99</scope>
    <source>
        <tissue>Eye</tissue>
        <tissue>Testis</tissue>
    </source>
</reference>
<reference key="6">
    <citation type="journal article" date="2012" name="Proc. Natl. Acad. Sci. U.S.A.">
        <title>N-terminal acetylome analyses and functional insights of the N-terminal acetyltransferase NatB.</title>
        <authorList>
            <person name="Van Damme P."/>
            <person name="Lasa M."/>
            <person name="Polevoda B."/>
            <person name="Gazquez C."/>
            <person name="Elosegui-Artola A."/>
            <person name="Kim D.S."/>
            <person name="De Juan-Pardo E."/>
            <person name="Demeyer K."/>
            <person name="Hole K."/>
            <person name="Larrea E."/>
            <person name="Timmerman E."/>
            <person name="Prieto J."/>
            <person name="Arnesen T."/>
            <person name="Sherman F."/>
            <person name="Gevaert K."/>
            <person name="Aldabe R."/>
        </authorList>
    </citation>
    <scope>ACETYLATION [LARGE SCALE ANALYSIS] AT MET-1</scope>
    <scope>IDENTIFICATION BY MASS SPECTROMETRY [LARGE SCALE ANALYSIS]</scope>
</reference>
<reference key="7">
    <citation type="journal article" date="2015" name="J. Biol. Chem.">
        <title>Identification of a novel sequence motif recognized by the ankyrin repeat domain of zDHHC17/13 S-acyltransferases.</title>
        <authorList>
            <person name="Lemonidis K."/>
            <person name="Sanchez-Perez M.C."/>
            <person name="Chamberlain L.H."/>
        </authorList>
    </citation>
    <scope>INTERACTION WITH CLIP3; HTT AND MAP6</scope>
</reference>
<name>ZDH13_HUMAN</name>
<proteinExistence type="evidence at protein level"/>
<comment type="function">
    <text evidence="2">Palmitoyltransferase that could catalyze the addition of palmitate onto various protein substrates (By similarity). Palmitoyltransferase for HTT and GAD2. May play a role in Mg(2+) transport.</text>
</comment>
<comment type="catalytic activity">
    <reaction evidence="2">
        <text>L-cysteinyl-[protein] + hexadecanoyl-CoA = S-hexadecanoyl-L-cysteinyl-[protein] + CoA</text>
        <dbReference type="Rhea" id="RHEA:36683"/>
        <dbReference type="Rhea" id="RHEA-COMP:10131"/>
        <dbReference type="Rhea" id="RHEA-COMP:11032"/>
        <dbReference type="ChEBI" id="CHEBI:29950"/>
        <dbReference type="ChEBI" id="CHEBI:57287"/>
        <dbReference type="ChEBI" id="CHEBI:57379"/>
        <dbReference type="ChEBI" id="CHEBI:74151"/>
        <dbReference type="EC" id="2.3.1.225"/>
    </reaction>
    <physiologicalReaction direction="left-to-right" evidence="2">
        <dbReference type="Rhea" id="RHEA:36684"/>
    </physiologicalReaction>
</comment>
<comment type="subunit">
    <text evidence="2 8">Interacts (via ANK repeats) with CLIP3 (PubMed:26198635). Interacts (via ANK repeats) with DNAJC5 (via C-terminus) (By similarity). Interacts (via ANK repeats) with HTT (PubMed:26198635). Interacts (via ANK repeats) with MAP6 (PubMed:26198635). Interacts (via ANK repeats) with SNAP23. Interacts (via ANK repeats) with SNAP25. May interact (via ANK repeats) with SPRED2 (By similarity).</text>
</comment>
<comment type="subcellular location">
    <subcellularLocation>
        <location evidence="2">Golgi apparatus membrane</location>
        <topology evidence="3">Multi-pass membrane protein</topology>
    </subcellularLocation>
    <subcellularLocation>
        <location evidence="2">Cytoplasmic vesicle membrane</location>
        <topology evidence="3">Multi-pass membrane protein</topology>
    </subcellularLocation>
    <text evidence="2">Low extracellular Mg(2+) induces increase in Golgi and in post-Golgi vesicles.</text>
</comment>
<comment type="alternative products">
    <event type="alternative splicing"/>
    <isoform>
        <id>Q8IUH4-1</id>
        <name>1</name>
        <sequence type="displayed"/>
    </isoform>
    <isoform>
        <id>Q8IUH4-2</id>
        <name>2</name>
        <sequence type="described" ref="VSP_010029"/>
    </isoform>
    <isoform>
        <id>Q8IUH4-3</id>
        <name>3</name>
        <sequence type="described" ref="VSP_010028"/>
    </isoform>
</comment>
<comment type="domain">
    <text evidence="1">The DHHC domain is required for palmitoyltransferase activity.</text>
</comment>
<comment type="similarity">
    <text evidence="12">Belongs to the DHHC palmitoyltransferase family. AKR/ZDHHC17 subfamily.</text>
</comment>
<comment type="sequence caution" evidence="12">
    <conflict type="erroneous termination">
        <sequence resource="EMBL-CDS" id="BAA91856"/>
    </conflict>
    <text>Truncated C-terminus.</text>
</comment>